<sequence>MDLQAQLEELKTKTQEALKQLNGDHSKELQELRVAVLGKKGTLTELLKGLKDLSNDLRPVVGKQVNELRDFLTQAFEEQAKVVEAAKIQAKLDSESIDVTLPGRQMKQGYRHVLTQISEEIEDIFLGMGFQIVDGFEVEKDYYNFERMNLPKDHPARDMQDTFYITEDILLRTHTSPVQARTLDQHDFSKGPLKMISPGRVFRRDTDDATHSHQFHQIEGLVVGKSISMGDLKGTLEMIIKKMFGKERKIRLRPSYFPFTEPSVEVDVSCFKCGGKGCNVCKKTGWIEILGAGMVHPSVLEMSGVNAQEYSGFAFGLGQERIAMLRYGINDIRGFYQGDSRFSKQFK</sequence>
<dbReference type="EC" id="6.1.1.20" evidence="1"/>
<dbReference type="EMBL" id="FM204883">
    <property type="protein sequence ID" value="CAW93451.1"/>
    <property type="molecule type" value="Genomic_DNA"/>
</dbReference>
<dbReference type="RefSeq" id="WP_012678105.1">
    <property type="nucleotide sequence ID" value="NC_012471.1"/>
</dbReference>
<dbReference type="SMR" id="C0M7G8"/>
<dbReference type="KEGG" id="seu:SEQ_0929"/>
<dbReference type="HOGENOM" id="CLU_025086_0_1_9"/>
<dbReference type="OrthoDB" id="9800719at2"/>
<dbReference type="Proteomes" id="UP000001365">
    <property type="component" value="Chromosome"/>
</dbReference>
<dbReference type="GO" id="GO:0005737">
    <property type="term" value="C:cytoplasm"/>
    <property type="evidence" value="ECO:0007669"/>
    <property type="project" value="UniProtKB-SubCell"/>
</dbReference>
<dbReference type="GO" id="GO:0005524">
    <property type="term" value="F:ATP binding"/>
    <property type="evidence" value="ECO:0007669"/>
    <property type="project" value="UniProtKB-UniRule"/>
</dbReference>
<dbReference type="GO" id="GO:0140096">
    <property type="term" value="F:catalytic activity, acting on a protein"/>
    <property type="evidence" value="ECO:0007669"/>
    <property type="project" value="UniProtKB-ARBA"/>
</dbReference>
<dbReference type="GO" id="GO:0000287">
    <property type="term" value="F:magnesium ion binding"/>
    <property type="evidence" value="ECO:0007669"/>
    <property type="project" value="UniProtKB-UniRule"/>
</dbReference>
<dbReference type="GO" id="GO:0004826">
    <property type="term" value="F:phenylalanine-tRNA ligase activity"/>
    <property type="evidence" value="ECO:0007669"/>
    <property type="project" value="UniProtKB-UniRule"/>
</dbReference>
<dbReference type="GO" id="GO:0016740">
    <property type="term" value="F:transferase activity"/>
    <property type="evidence" value="ECO:0007669"/>
    <property type="project" value="UniProtKB-ARBA"/>
</dbReference>
<dbReference type="GO" id="GO:0000049">
    <property type="term" value="F:tRNA binding"/>
    <property type="evidence" value="ECO:0007669"/>
    <property type="project" value="InterPro"/>
</dbReference>
<dbReference type="GO" id="GO:0006432">
    <property type="term" value="P:phenylalanyl-tRNA aminoacylation"/>
    <property type="evidence" value="ECO:0007669"/>
    <property type="project" value="UniProtKB-UniRule"/>
</dbReference>
<dbReference type="CDD" id="cd00496">
    <property type="entry name" value="PheRS_alpha_core"/>
    <property type="match status" value="1"/>
</dbReference>
<dbReference type="FunFam" id="3.30.930.10:FF:000003">
    <property type="entry name" value="Phenylalanine--tRNA ligase alpha subunit"/>
    <property type="match status" value="1"/>
</dbReference>
<dbReference type="Gene3D" id="3.30.930.10">
    <property type="entry name" value="Bira Bifunctional Protein, Domain 2"/>
    <property type="match status" value="1"/>
</dbReference>
<dbReference type="HAMAP" id="MF_00281">
    <property type="entry name" value="Phe_tRNA_synth_alpha1"/>
    <property type="match status" value="1"/>
</dbReference>
<dbReference type="InterPro" id="IPR006195">
    <property type="entry name" value="aa-tRNA-synth_II"/>
</dbReference>
<dbReference type="InterPro" id="IPR045864">
    <property type="entry name" value="aa-tRNA-synth_II/BPL/LPL"/>
</dbReference>
<dbReference type="InterPro" id="IPR004529">
    <property type="entry name" value="Phe-tRNA-synth_IIc_asu"/>
</dbReference>
<dbReference type="InterPro" id="IPR004188">
    <property type="entry name" value="Phe-tRNA_ligase_II_N"/>
</dbReference>
<dbReference type="InterPro" id="IPR022911">
    <property type="entry name" value="Phe_tRNA_ligase_alpha1_bac"/>
</dbReference>
<dbReference type="InterPro" id="IPR002319">
    <property type="entry name" value="Phenylalanyl-tRNA_Synthase"/>
</dbReference>
<dbReference type="InterPro" id="IPR010978">
    <property type="entry name" value="tRNA-bd_arm"/>
</dbReference>
<dbReference type="NCBIfam" id="TIGR00468">
    <property type="entry name" value="pheS"/>
    <property type="match status" value="1"/>
</dbReference>
<dbReference type="PANTHER" id="PTHR11538:SF41">
    <property type="entry name" value="PHENYLALANINE--TRNA LIGASE, MITOCHONDRIAL"/>
    <property type="match status" value="1"/>
</dbReference>
<dbReference type="PANTHER" id="PTHR11538">
    <property type="entry name" value="PHENYLALANYL-TRNA SYNTHETASE"/>
    <property type="match status" value="1"/>
</dbReference>
<dbReference type="Pfam" id="PF02912">
    <property type="entry name" value="Phe_tRNA-synt_N"/>
    <property type="match status" value="1"/>
</dbReference>
<dbReference type="Pfam" id="PF01409">
    <property type="entry name" value="tRNA-synt_2d"/>
    <property type="match status" value="1"/>
</dbReference>
<dbReference type="SUPFAM" id="SSF55681">
    <property type="entry name" value="Class II aaRS and biotin synthetases"/>
    <property type="match status" value="1"/>
</dbReference>
<dbReference type="SUPFAM" id="SSF46589">
    <property type="entry name" value="tRNA-binding arm"/>
    <property type="match status" value="1"/>
</dbReference>
<dbReference type="PROSITE" id="PS50862">
    <property type="entry name" value="AA_TRNA_LIGASE_II"/>
    <property type="match status" value="1"/>
</dbReference>
<gene>
    <name evidence="1" type="primary">pheS</name>
    <name type="ordered locus">SEQ_0929</name>
</gene>
<name>SYFA_STRE4</name>
<keyword id="KW-0030">Aminoacyl-tRNA synthetase</keyword>
<keyword id="KW-0067">ATP-binding</keyword>
<keyword id="KW-0963">Cytoplasm</keyword>
<keyword id="KW-0436">Ligase</keyword>
<keyword id="KW-0460">Magnesium</keyword>
<keyword id="KW-0479">Metal-binding</keyword>
<keyword id="KW-0547">Nucleotide-binding</keyword>
<keyword id="KW-0648">Protein biosynthesis</keyword>
<proteinExistence type="inferred from homology"/>
<accession>C0M7G8</accession>
<evidence type="ECO:0000255" key="1">
    <source>
        <dbReference type="HAMAP-Rule" id="MF_00281"/>
    </source>
</evidence>
<feature type="chain" id="PRO_1000199326" description="Phenylalanine--tRNA ligase alpha subunit">
    <location>
        <begin position="1"/>
        <end position="347"/>
    </location>
</feature>
<feature type="binding site" evidence="1">
    <location>
        <position position="261"/>
    </location>
    <ligand>
        <name>Mg(2+)</name>
        <dbReference type="ChEBI" id="CHEBI:18420"/>
        <note>shared with beta subunit</note>
    </ligand>
</feature>
<reference key="1">
    <citation type="journal article" date="2009" name="PLoS Pathog.">
        <title>Genomic evidence for the evolution of Streptococcus equi: host restriction, increased virulence, and genetic exchange with human pathogens.</title>
        <authorList>
            <person name="Holden M.T.G."/>
            <person name="Heather Z."/>
            <person name="Paillot R."/>
            <person name="Steward K.F."/>
            <person name="Webb K."/>
            <person name="Ainslie F."/>
            <person name="Jourdan T."/>
            <person name="Bason N.C."/>
            <person name="Holroyd N.E."/>
            <person name="Mungall K."/>
            <person name="Quail M.A."/>
            <person name="Sanders M."/>
            <person name="Simmonds M."/>
            <person name="Willey D."/>
            <person name="Brooks K."/>
            <person name="Aanensen D.M."/>
            <person name="Spratt B.G."/>
            <person name="Jolley K.A."/>
            <person name="Maiden M.C.J."/>
            <person name="Kehoe M."/>
            <person name="Chanter N."/>
            <person name="Bentley S.D."/>
            <person name="Robinson C."/>
            <person name="Maskell D.J."/>
            <person name="Parkhill J."/>
            <person name="Waller A.S."/>
        </authorList>
    </citation>
    <scope>NUCLEOTIDE SEQUENCE [LARGE SCALE GENOMIC DNA]</scope>
    <source>
        <strain>4047</strain>
    </source>
</reference>
<comment type="catalytic activity">
    <reaction evidence="1">
        <text>tRNA(Phe) + L-phenylalanine + ATP = L-phenylalanyl-tRNA(Phe) + AMP + diphosphate + H(+)</text>
        <dbReference type="Rhea" id="RHEA:19413"/>
        <dbReference type="Rhea" id="RHEA-COMP:9668"/>
        <dbReference type="Rhea" id="RHEA-COMP:9699"/>
        <dbReference type="ChEBI" id="CHEBI:15378"/>
        <dbReference type="ChEBI" id="CHEBI:30616"/>
        <dbReference type="ChEBI" id="CHEBI:33019"/>
        <dbReference type="ChEBI" id="CHEBI:58095"/>
        <dbReference type="ChEBI" id="CHEBI:78442"/>
        <dbReference type="ChEBI" id="CHEBI:78531"/>
        <dbReference type="ChEBI" id="CHEBI:456215"/>
        <dbReference type="EC" id="6.1.1.20"/>
    </reaction>
</comment>
<comment type="cofactor">
    <cofactor evidence="1">
        <name>Mg(2+)</name>
        <dbReference type="ChEBI" id="CHEBI:18420"/>
    </cofactor>
    <text evidence="1">Binds 2 magnesium ions per tetramer.</text>
</comment>
<comment type="subunit">
    <text evidence="1">Tetramer of two alpha and two beta subunits.</text>
</comment>
<comment type="subcellular location">
    <subcellularLocation>
        <location evidence="1">Cytoplasm</location>
    </subcellularLocation>
</comment>
<comment type="similarity">
    <text evidence="1">Belongs to the class-II aminoacyl-tRNA synthetase family. Phe-tRNA synthetase alpha subunit type 1 subfamily.</text>
</comment>
<protein>
    <recommendedName>
        <fullName evidence="1">Phenylalanine--tRNA ligase alpha subunit</fullName>
        <ecNumber evidence="1">6.1.1.20</ecNumber>
    </recommendedName>
    <alternativeName>
        <fullName evidence="1">Phenylalanyl-tRNA synthetase alpha subunit</fullName>
        <shortName evidence="1">PheRS</shortName>
    </alternativeName>
</protein>
<organism>
    <name type="scientific">Streptococcus equi subsp. equi (strain 4047)</name>
    <dbReference type="NCBI Taxonomy" id="553482"/>
    <lineage>
        <taxon>Bacteria</taxon>
        <taxon>Bacillati</taxon>
        <taxon>Bacillota</taxon>
        <taxon>Bacilli</taxon>
        <taxon>Lactobacillales</taxon>
        <taxon>Streptococcaceae</taxon>
        <taxon>Streptococcus</taxon>
    </lineage>
</organism>